<accession>B4F119</accession>
<organism>
    <name type="scientific">Proteus mirabilis (strain HI4320)</name>
    <dbReference type="NCBI Taxonomy" id="529507"/>
    <lineage>
        <taxon>Bacteria</taxon>
        <taxon>Pseudomonadati</taxon>
        <taxon>Pseudomonadota</taxon>
        <taxon>Gammaproteobacteria</taxon>
        <taxon>Enterobacterales</taxon>
        <taxon>Morganellaceae</taxon>
        <taxon>Proteus</taxon>
    </lineage>
</organism>
<sequence length="315" mass="34832">MTTNNFSHTSVLLDEAVNGLNIKPSGIYIDGTFGRGGHSRLILSQLGEQGRLIAIDRDPQAIAVANEIDDPRFSIIHGPFSNIEHYINELGLSGKVDGVLLDLGVSSPQLDDPERGFSFMRDGPLDMRMDPTTGQSAAQWLMNAEEDDITWVLKTFGEERFAKRIARAIVARNKTEEPLTRTKQLADLISEASPVKERHKHPATRSFQAIRIYINSELDEIEKALKGAVSILAPAGRLSVISFHSLEDRLVKRFIRDESKGPVVPAGIPLTEEQIKALGSARLSSIHKMKPTGVEVEENPRARSSVLRVAQRIEE</sequence>
<comment type="function">
    <text evidence="1">Specifically methylates the N4 position of cytidine in position 1402 (C1402) of 16S rRNA.</text>
</comment>
<comment type="catalytic activity">
    <reaction evidence="1">
        <text>cytidine(1402) in 16S rRNA + S-adenosyl-L-methionine = N(4)-methylcytidine(1402) in 16S rRNA + S-adenosyl-L-homocysteine + H(+)</text>
        <dbReference type="Rhea" id="RHEA:42928"/>
        <dbReference type="Rhea" id="RHEA-COMP:10286"/>
        <dbReference type="Rhea" id="RHEA-COMP:10287"/>
        <dbReference type="ChEBI" id="CHEBI:15378"/>
        <dbReference type="ChEBI" id="CHEBI:57856"/>
        <dbReference type="ChEBI" id="CHEBI:59789"/>
        <dbReference type="ChEBI" id="CHEBI:74506"/>
        <dbReference type="ChEBI" id="CHEBI:82748"/>
        <dbReference type="EC" id="2.1.1.199"/>
    </reaction>
</comment>
<comment type="subcellular location">
    <subcellularLocation>
        <location evidence="1">Cytoplasm</location>
    </subcellularLocation>
</comment>
<comment type="similarity">
    <text evidence="1">Belongs to the methyltransferase superfamily. RsmH family.</text>
</comment>
<gene>
    <name evidence="1" type="primary">rsmH</name>
    <name type="synonym">mraW</name>
    <name type="ordered locus">PMI2078</name>
</gene>
<dbReference type="EC" id="2.1.1.199" evidence="1"/>
<dbReference type="EMBL" id="AM942759">
    <property type="protein sequence ID" value="CAR44158.1"/>
    <property type="molecule type" value="Genomic_DNA"/>
</dbReference>
<dbReference type="RefSeq" id="WP_004244125.1">
    <property type="nucleotide sequence ID" value="NC_010554.1"/>
</dbReference>
<dbReference type="SMR" id="B4F119"/>
<dbReference type="EnsemblBacteria" id="CAR44158">
    <property type="protein sequence ID" value="CAR44158"/>
    <property type="gene ID" value="PMI2078"/>
</dbReference>
<dbReference type="GeneID" id="6803612"/>
<dbReference type="KEGG" id="pmr:PMI2078"/>
<dbReference type="eggNOG" id="COG0275">
    <property type="taxonomic scope" value="Bacteria"/>
</dbReference>
<dbReference type="HOGENOM" id="CLU_038422_2_0_6"/>
<dbReference type="Proteomes" id="UP000008319">
    <property type="component" value="Chromosome"/>
</dbReference>
<dbReference type="GO" id="GO:0005737">
    <property type="term" value="C:cytoplasm"/>
    <property type="evidence" value="ECO:0007669"/>
    <property type="project" value="UniProtKB-SubCell"/>
</dbReference>
<dbReference type="GO" id="GO:0071424">
    <property type="term" value="F:rRNA (cytosine-N4-)-methyltransferase activity"/>
    <property type="evidence" value="ECO:0007669"/>
    <property type="project" value="UniProtKB-UniRule"/>
</dbReference>
<dbReference type="GO" id="GO:0070475">
    <property type="term" value="P:rRNA base methylation"/>
    <property type="evidence" value="ECO:0007669"/>
    <property type="project" value="UniProtKB-UniRule"/>
</dbReference>
<dbReference type="FunFam" id="1.10.150.170:FF:000001">
    <property type="entry name" value="Ribosomal RNA small subunit methyltransferase H"/>
    <property type="match status" value="1"/>
</dbReference>
<dbReference type="Gene3D" id="1.10.150.170">
    <property type="entry name" value="Putative methyltransferase TM0872, insert domain"/>
    <property type="match status" value="1"/>
</dbReference>
<dbReference type="Gene3D" id="3.40.50.150">
    <property type="entry name" value="Vaccinia Virus protein VP39"/>
    <property type="match status" value="1"/>
</dbReference>
<dbReference type="HAMAP" id="MF_01007">
    <property type="entry name" value="16SrRNA_methyltr_H"/>
    <property type="match status" value="1"/>
</dbReference>
<dbReference type="InterPro" id="IPR002903">
    <property type="entry name" value="RsmH"/>
</dbReference>
<dbReference type="InterPro" id="IPR023397">
    <property type="entry name" value="SAM-dep_MeTrfase_MraW_recog"/>
</dbReference>
<dbReference type="InterPro" id="IPR029063">
    <property type="entry name" value="SAM-dependent_MTases_sf"/>
</dbReference>
<dbReference type="NCBIfam" id="TIGR00006">
    <property type="entry name" value="16S rRNA (cytosine(1402)-N(4))-methyltransferase RsmH"/>
    <property type="match status" value="1"/>
</dbReference>
<dbReference type="PANTHER" id="PTHR11265:SF0">
    <property type="entry name" value="12S RRNA N4-METHYLCYTIDINE METHYLTRANSFERASE"/>
    <property type="match status" value="1"/>
</dbReference>
<dbReference type="PANTHER" id="PTHR11265">
    <property type="entry name" value="S-ADENOSYL-METHYLTRANSFERASE MRAW"/>
    <property type="match status" value="1"/>
</dbReference>
<dbReference type="Pfam" id="PF01795">
    <property type="entry name" value="Methyltransf_5"/>
    <property type="match status" value="1"/>
</dbReference>
<dbReference type="PIRSF" id="PIRSF004486">
    <property type="entry name" value="MraW"/>
    <property type="match status" value="1"/>
</dbReference>
<dbReference type="SUPFAM" id="SSF81799">
    <property type="entry name" value="Putative methyltransferase TM0872, insert domain"/>
    <property type="match status" value="1"/>
</dbReference>
<dbReference type="SUPFAM" id="SSF53335">
    <property type="entry name" value="S-adenosyl-L-methionine-dependent methyltransferases"/>
    <property type="match status" value="1"/>
</dbReference>
<name>RSMH_PROMH</name>
<proteinExistence type="inferred from homology"/>
<reference key="1">
    <citation type="journal article" date="2008" name="J. Bacteriol.">
        <title>Complete genome sequence of uropathogenic Proteus mirabilis, a master of both adherence and motility.</title>
        <authorList>
            <person name="Pearson M.M."/>
            <person name="Sebaihia M."/>
            <person name="Churcher C."/>
            <person name="Quail M.A."/>
            <person name="Seshasayee A.S."/>
            <person name="Luscombe N.M."/>
            <person name="Abdellah Z."/>
            <person name="Arrosmith C."/>
            <person name="Atkin B."/>
            <person name="Chillingworth T."/>
            <person name="Hauser H."/>
            <person name="Jagels K."/>
            <person name="Moule S."/>
            <person name="Mungall K."/>
            <person name="Norbertczak H."/>
            <person name="Rabbinowitsch E."/>
            <person name="Walker D."/>
            <person name="Whithead S."/>
            <person name="Thomson N.R."/>
            <person name="Rather P.N."/>
            <person name="Parkhill J."/>
            <person name="Mobley H.L.T."/>
        </authorList>
    </citation>
    <scope>NUCLEOTIDE SEQUENCE [LARGE SCALE GENOMIC DNA]</scope>
    <source>
        <strain>HI4320</strain>
    </source>
</reference>
<evidence type="ECO:0000255" key="1">
    <source>
        <dbReference type="HAMAP-Rule" id="MF_01007"/>
    </source>
</evidence>
<feature type="chain" id="PRO_0000387047" description="Ribosomal RNA small subunit methyltransferase H">
    <location>
        <begin position="1"/>
        <end position="315"/>
    </location>
</feature>
<feature type="binding site" evidence="1">
    <location>
        <begin position="36"/>
        <end position="38"/>
    </location>
    <ligand>
        <name>S-adenosyl-L-methionine</name>
        <dbReference type="ChEBI" id="CHEBI:59789"/>
    </ligand>
</feature>
<feature type="binding site" evidence="1">
    <location>
        <position position="56"/>
    </location>
    <ligand>
        <name>S-adenosyl-L-methionine</name>
        <dbReference type="ChEBI" id="CHEBI:59789"/>
    </ligand>
</feature>
<feature type="binding site" evidence="1">
    <location>
        <position position="80"/>
    </location>
    <ligand>
        <name>S-adenosyl-L-methionine</name>
        <dbReference type="ChEBI" id="CHEBI:59789"/>
    </ligand>
</feature>
<feature type="binding site" evidence="1">
    <location>
        <position position="102"/>
    </location>
    <ligand>
        <name>S-adenosyl-L-methionine</name>
        <dbReference type="ChEBI" id="CHEBI:59789"/>
    </ligand>
</feature>
<feature type="binding site" evidence="1">
    <location>
        <position position="109"/>
    </location>
    <ligand>
        <name>S-adenosyl-L-methionine</name>
        <dbReference type="ChEBI" id="CHEBI:59789"/>
    </ligand>
</feature>
<keyword id="KW-0963">Cytoplasm</keyword>
<keyword id="KW-0489">Methyltransferase</keyword>
<keyword id="KW-1185">Reference proteome</keyword>
<keyword id="KW-0698">rRNA processing</keyword>
<keyword id="KW-0949">S-adenosyl-L-methionine</keyword>
<keyword id="KW-0808">Transferase</keyword>
<protein>
    <recommendedName>
        <fullName evidence="1">Ribosomal RNA small subunit methyltransferase H</fullName>
        <ecNumber evidence="1">2.1.1.199</ecNumber>
    </recommendedName>
    <alternativeName>
        <fullName evidence="1">16S rRNA m(4)C1402 methyltransferase</fullName>
    </alternativeName>
    <alternativeName>
        <fullName evidence="1">rRNA (cytosine-N(4)-)-methyltransferase RsmH</fullName>
    </alternativeName>
</protein>